<feature type="signal peptide" evidence="1">
    <location>
        <begin position="1"/>
        <end position="24"/>
    </location>
</feature>
<feature type="propeptide" id="PRO_0000442668" evidence="4">
    <location>
        <begin position="25"/>
        <end status="unknown"/>
    </location>
</feature>
<feature type="chain" id="PRO_0000028925" description="Zinc metalloproteinase-like protein nas-21">
    <location>
        <begin status="unknown"/>
        <end position="380"/>
    </location>
</feature>
<feature type="domain" description="Peptidase M12A" evidence="3">
    <location>
        <begin position="46"/>
        <end position="234"/>
    </location>
</feature>
<feature type="active site" evidence="3">
    <location>
        <position position="138"/>
    </location>
</feature>
<feature type="glycosylation site" description="N-linked (GlcNAc...) asparagine" evidence="2">
    <location>
        <position position="87"/>
    </location>
</feature>
<feature type="glycosylation site" description="N-linked (GlcNAc...) asparagine" evidence="2">
    <location>
        <position position="253"/>
    </location>
</feature>
<feature type="glycosylation site" description="N-linked (GlcNAc...) asparagine" evidence="2">
    <location>
        <position position="269"/>
    </location>
</feature>
<feature type="glycosylation site" description="N-linked (GlcNAc...) asparagine" evidence="2">
    <location>
        <position position="283"/>
    </location>
</feature>
<feature type="glycosylation site" description="N-linked (GlcNAc...) asparagine" evidence="2">
    <location>
        <position position="304"/>
    </location>
</feature>
<feature type="disulfide bond" evidence="3">
    <location>
        <begin position="90"/>
        <end position="233"/>
    </location>
</feature>
<feature type="disulfide bond" evidence="3">
    <location>
        <begin position="110"/>
        <end position="130"/>
    </location>
</feature>
<protein>
    <recommendedName>
        <fullName evidence="4">Zinc metalloproteinase-like protein nas-21</fullName>
    </recommendedName>
    <alternativeName>
        <fullName>Nematode astacin 21</fullName>
    </alternativeName>
</protein>
<name>NAS21_CAEEL</name>
<dbReference type="EMBL" id="Z74042">
    <property type="protein sequence ID" value="CAA98533.2"/>
    <property type="molecule type" value="Genomic_DNA"/>
</dbReference>
<dbReference type="EMBL" id="AJ561211">
    <property type="protein sequence ID" value="CAD99213.1"/>
    <property type="molecule type" value="mRNA"/>
</dbReference>
<dbReference type="PIR" id="T24841">
    <property type="entry name" value="T24841"/>
</dbReference>
<dbReference type="RefSeq" id="NP_505907.2">
    <property type="nucleotide sequence ID" value="NM_073506.6"/>
</dbReference>
<dbReference type="SMR" id="Q22401"/>
<dbReference type="STRING" id="6239.T11F9.5.1"/>
<dbReference type="GlyCosmos" id="Q22401">
    <property type="glycosylation" value="5 sites, No reported glycans"/>
</dbReference>
<dbReference type="PaxDb" id="6239-T11F9.5"/>
<dbReference type="EnsemblMetazoa" id="T11F9.5.1">
    <property type="protein sequence ID" value="T11F9.5.1"/>
    <property type="gene ID" value="WBGene00003540"/>
</dbReference>
<dbReference type="GeneID" id="188422"/>
<dbReference type="KEGG" id="cel:CELE_T11F9.5"/>
<dbReference type="UCSC" id="T11F9.5">
    <property type="organism name" value="c. elegans"/>
</dbReference>
<dbReference type="AGR" id="WB:WBGene00003540"/>
<dbReference type="CTD" id="188422"/>
<dbReference type="WormBase" id="T11F9.5">
    <property type="protein sequence ID" value="CE41929"/>
    <property type="gene ID" value="WBGene00003540"/>
    <property type="gene designation" value="nas-21"/>
</dbReference>
<dbReference type="eggNOG" id="KOG3714">
    <property type="taxonomic scope" value="Eukaryota"/>
</dbReference>
<dbReference type="GeneTree" id="ENSGT00970000196541"/>
<dbReference type="HOGENOM" id="CLU_017286_1_1_1"/>
<dbReference type="InParanoid" id="Q22401"/>
<dbReference type="OMA" id="AGSICHE"/>
<dbReference type="OrthoDB" id="5850939at2759"/>
<dbReference type="PhylomeDB" id="Q22401"/>
<dbReference type="PRO" id="PR:Q22401"/>
<dbReference type="Proteomes" id="UP000001940">
    <property type="component" value="Chromosome V"/>
</dbReference>
<dbReference type="Bgee" id="WBGene00003540">
    <property type="expression patterns" value="Expressed in adult organism and 1 other cell type or tissue"/>
</dbReference>
<dbReference type="GO" id="GO:0005576">
    <property type="term" value="C:extracellular region"/>
    <property type="evidence" value="ECO:0007669"/>
    <property type="project" value="UniProtKB-SubCell"/>
</dbReference>
<dbReference type="GO" id="GO:0004222">
    <property type="term" value="F:metalloendopeptidase activity"/>
    <property type="evidence" value="ECO:0000318"/>
    <property type="project" value="GO_Central"/>
</dbReference>
<dbReference type="GO" id="GO:0008270">
    <property type="term" value="F:zinc ion binding"/>
    <property type="evidence" value="ECO:0007669"/>
    <property type="project" value="InterPro"/>
</dbReference>
<dbReference type="GO" id="GO:0018996">
    <property type="term" value="P:molting cycle, collagen and cuticulin-based cuticle"/>
    <property type="evidence" value="ECO:0007669"/>
    <property type="project" value="InterPro"/>
</dbReference>
<dbReference type="GO" id="GO:0006508">
    <property type="term" value="P:proteolysis"/>
    <property type="evidence" value="ECO:0007669"/>
    <property type="project" value="InterPro"/>
</dbReference>
<dbReference type="CDD" id="cd04280">
    <property type="entry name" value="ZnMc_astacin_like"/>
    <property type="match status" value="1"/>
</dbReference>
<dbReference type="Gene3D" id="3.40.390.10">
    <property type="entry name" value="Collagenase (Catalytic Domain)"/>
    <property type="match status" value="1"/>
</dbReference>
<dbReference type="InterPro" id="IPR034035">
    <property type="entry name" value="Astacin-like_dom"/>
</dbReference>
<dbReference type="InterPro" id="IPR024079">
    <property type="entry name" value="MetalloPept_cat_dom_sf"/>
</dbReference>
<dbReference type="InterPro" id="IPR017050">
    <property type="entry name" value="Metallopeptidase_nem"/>
</dbReference>
<dbReference type="InterPro" id="IPR001506">
    <property type="entry name" value="Peptidase_M12A"/>
</dbReference>
<dbReference type="InterPro" id="IPR006026">
    <property type="entry name" value="Peptidase_Metallo"/>
</dbReference>
<dbReference type="PANTHER" id="PTHR10127">
    <property type="entry name" value="DISCOIDIN, CUB, EGF, LAMININ , AND ZINC METALLOPROTEASE DOMAIN CONTAINING"/>
    <property type="match status" value="1"/>
</dbReference>
<dbReference type="PANTHER" id="PTHR10127:SF794">
    <property type="entry name" value="ZINC METALLOPROTEINASE NAS-22-RELATED"/>
    <property type="match status" value="1"/>
</dbReference>
<dbReference type="Pfam" id="PF01400">
    <property type="entry name" value="Astacin"/>
    <property type="match status" value="1"/>
</dbReference>
<dbReference type="PIRSF" id="PIRSF036365">
    <property type="entry name" value="Astacin_nematoda"/>
    <property type="match status" value="1"/>
</dbReference>
<dbReference type="PRINTS" id="PR00480">
    <property type="entry name" value="ASTACIN"/>
</dbReference>
<dbReference type="SMART" id="SM00235">
    <property type="entry name" value="ZnMc"/>
    <property type="match status" value="1"/>
</dbReference>
<dbReference type="SUPFAM" id="SSF55486">
    <property type="entry name" value="Metalloproteases ('zincins'), catalytic domain"/>
    <property type="match status" value="1"/>
</dbReference>
<dbReference type="PROSITE" id="PS51864">
    <property type="entry name" value="ASTACIN"/>
    <property type="match status" value="1"/>
</dbReference>
<accession>Q22401</accession>
<accession>Q7Z0M8</accession>
<organism>
    <name type="scientific">Caenorhabditis elegans</name>
    <dbReference type="NCBI Taxonomy" id="6239"/>
    <lineage>
        <taxon>Eukaryota</taxon>
        <taxon>Metazoa</taxon>
        <taxon>Ecdysozoa</taxon>
        <taxon>Nematoda</taxon>
        <taxon>Chromadorea</taxon>
        <taxon>Rhabditida</taxon>
        <taxon>Rhabditina</taxon>
        <taxon>Rhabditomorpha</taxon>
        <taxon>Rhabditoidea</taxon>
        <taxon>Rhabditidae</taxon>
        <taxon>Peloderinae</taxon>
        <taxon>Caenorhabditis</taxon>
    </lineage>
</organism>
<comment type="function">
    <text evidence="4">May lack metalloprotease activity.</text>
</comment>
<comment type="subcellular location">
    <subcellularLocation>
        <location evidence="4">Secreted</location>
    </subcellularLocation>
</comment>
<comment type="caution">
    <text evidence="4">Ser-137 is present instead of the conserved His which is expected to be zinc-binding residue. There is therefore some uncertainty concerning the enzymatic activity of this protein.</text>
</comment>
<evidence type="ECO:0000255" key="1"/>
<evidence type="ECO:0000255" key="2">
    <source>
        <dbReference type="PROSITE-ProRule" id="PRU00498"/>
    </source>
</evidence>
<evidence type="ECO:0000255" key="3">
    <source>
        <dbReference type="PROSITE-ProRule" id="PRU01211"/>
    </source>
</evidence>
<evidence type="ECO:0000305" key="4"/>
<gene>
    <name type="primary">nas-21</name>
    <name type="ORF">T11F9.5</name>
</gene>
<sequence>MNYFITFFFMHIAVLNFYFRFSNGNKIVMRVGGSPETKRLERSKRQALRMDNEPRWPRGTINYFFDEQRFDENSRATVLRAMEKISNHTCIKFSPKDARIKLRIVSDKGCQAAIGRVGGDQQYLSFPTSCYSVGSASELIHVIGFLHSHQRADRDEYLKLNLQPWRLNDWFQTMQYKKYLDQWWIVPYDYGSIMQYHDSDNEYGPKNSKYFRTMGSQIPSYFDYLMINEYYQCSCEGEEQINCKNRGYPNPGNCSECNCPLESSEEWKNITLNLDAGYMSLQNGTKLHQIDFVFRYLSISAPANKTIEVDIREITGVECNYGCYIGGIEVKTHEDRRMTSPRLCCKNDNEIYKSRNNPTIVMAFNSEGLDKYNIFYRFTD</sequence>
<keyword id="KW-1015">Disulfide bond</keyword>
<keyword id="KW-0325">Glycoprotein</keyword>
<keyword id="KW-1185">Reference proteome</keyword>
<keyword id="KW-0964">Secreted</keyword>
<keyword id="KW-0732">Signal</keyword>
<proteinExistence type="evidence at transcript level"/>
<reference key="1">
    <citation type="journal article" date="1998" name="Science">
        <title>Genome sequence of the nematode C. elegans: a platform for investigating biology.</title>
        <authorList>
            <consortium name="The C. elegans sequencing consortium"/>
        </authorList>
    </citation>
    <scope>NUCLEOTIDE SEQUENCE [LARGE SCALE GENOMIC DNA]</scope>
    <source>
        <strain>Bristol N2</strain>
    </source>
</reference>
<reference key="2">
    <citation type="journal article" date="2003" name="Eur. J. Biochem.">
        <title>The astacin protein family in Caenorhabditis elegans.</title>
        <authorList>
            <person name="Moehrlen F."/>
            <person name="Hutter H."/>
            <person name="Zwilling R."/>
        </authorList>
    </citation>
    <scope>NUCLEOTIDE SEQUENCE [MRNA] OF 157-238</scope>
    <scope>GENE STRUCTURE</scope>
    <scope>NOMENCLATURE</scope>
    <source>
        <strain>Bristol N2</strain>
    </source>
</reference>